<accession>Q8T6B9</accession>
<accession>Q0E8J8</accession>
<accession>Q95S11</accession>
<accession>Q9U696</accession>
<accession>Q9W0E6</accession>
<accession>Q9W0E7</accession>
<gene>
    <name evidence="8 11" type="primary">hfp</name>
    <name evidence="7" type="synonym">pUf68</name>
    <name evidence="11" type="ORF">CG12085</name>
</gene>
<proteinExistence type="evidence at protein level"/>
<organism evidence="12">
    <name type="scientific">Drosophila melanogaster</name>
    <name type="common">Fruit fly</name>
    <dbReference type="NCBI Taxonomy" id="7227"/>
    <lineage>
        <taxon>Eukaryota</taxon>
        <taxon>Metazoa</taxon>
        <taxon>Ecdysozoa</taxon>
        <taxon>Arthropoda</taxon>
        <taxon>Hexapoda</taxon>
        <taxon>Insecta</taxon>
        <taxon>Pterygota</taxon>
        <taxon>Neoptera</taxon>
        <taxon>Endopterygota</taxon>
        <taxon>Diptera</taxon>
        <taxon>Brachycera</taxon>
        <taxon>Muscomorpha</taxon>
        <taxon>Ephydroidea</taxon>
        <taxon>Drosophilidae</taxon>
        <taxon>Drosophila</taxon>
        <taxon>Sophophora</taxon>
    </lineage>
</organism>
<dbReference type="EMBL" id="AF190745">
    <property type="protein sequence ID" value="AAF04132.1"/>
    <property type="molecule type" value="mRNA"/>
</dbReference>
<dbReference type="EMBL" id="AF479079">
    <property type="protein sequence ID" value="AAL86452.1"/>
    <property type="molecule type" value="mRNA"/>
</dbReference>
<dbReference type="EMBL" id="AE014296">
    <property type="protein sequence ID" value="AAF47501.1"/>
    <property type="molecule type" value="Genomic_DNA"/>
</dbReference>
<dbReference type="EMBL" id="AE014296">
    <property type="protein sequence ID" value="AAG22221.1"/>
    <property type="molecule type" value="Genomic_DNA"/>
</dbReference>
<dbReference type="EMBL" id="AY061006">
    <property type="protein sequence ID" value="AAL28554.1"/>
    <property type="molecule type" value="mRNA"/>
</dbReference>
<dbReference type="EMBL" id="BT003317">
    <property type="protein sequence ID" value="AAO25077.1"/>
    <property type="molecule type" value="mRNA"/>
</dbReference>
<dbReference type="RefSeq" id="NP_001163315.1">
    <molecule id="Q8T6B9-2"/>
    <property type="nucleotide sequence ID" value="NM_001169844.2"/>
</dbReference>
<dbReference type="RefSeq" id="NP_001163316.1">
    <molecule id="Q8T6B9-2"/>
    <property type="nucleotide sequence ID" value="NM_001169845.2"/>
</dbReference>
<dbReference type="RefSeq" id="NP_001163317.1">
    <molecule id="Q8T6B9-2"/>
    <property type="nucleotide sequence ID" value="NM_001169846.2"/>
</dbReference>
<dbReference type="RefSeq" id="NP_001163318.1">
    <molecule id="Q8T6B9-2"/>
    <property type="nucleotide sequence ID" value="NM_001169847.2"/>
</dbReference>
<dbReference type="RefSeq" id="NP_001163319.1">
    <molecule id="Q8T6B9-2"/>
    <property type="nucleotide sequence ID" value="NM_001169848.2"/>
</dbReference>
<dbReference type="RefSeq" id="NP_001163320.1">
    <molecule id="Q8T6B9-2"/>
    <property type="nucleotide sequence ID" value="NM_001169849.2"/>
</dbReference>
<dbReference type="RefSeq" id="NP_525123.2">
    <molecule id="Q8T6B9-1"/>
    <property type="nucleotide sequence ID" value="NM_080384.4"/>
</dbReference>
<dbReference type="RefSeq" id="NP_728610.1">
    <molecule id="Q8T6B9-2"/>
    <property type="nucleotide sequence ID" value="NM_167880.3"/>
</dbReference>
<dbReference type="RefSeq" id="NP_728611.1">
    <molecule id="Q8T6B9-2"/>
    <property type="nucleotide sequence ID" value="NM_167881.3"/>
</dbReference>
<dbReference type="RefSeq" id="NP_728612.1">
    <molecule id="Q8T6B9-2"/>
    <property type="nucleotide sequence ID" value="NM_167882.3"/>
</dbReference>
<dbReference type="SMR" id="Q8T6B9"/>
<dbReference type="BioGRID" id="63711">
    <property type="interactions" value="57"/>
</dbReference>
<dbReference type="FunCoup" id="Q8T6B9">
    <property type="interactions" value="2328"/>
</dbReference>
<dbReference type="IntAct" id="Q8T6B9">
    <property type="interactions" value="29"/>
</dbReference>
<dbReference type="MINT" id="Q8T6B9"/>
<dbReference type="STRING" id="7227.FBpp0072593"/>
<dbReference type="GlyGen" id="Q8T6B9">
    <property type="glycosylation" value="1 site"/>
</dbReference>
<dbReference type="iPTMnet" id="Q8T6B9"/>
<dbReference type="PaxDb" id="7227-FBpp0072593"/>
<dbReference type="DNASU" id="38173"/>
<dbReference type="EnsemblMetazoa" id="FBtr0072707">
    <molecule id="Q8T6B9-2"/>
    <property type="protein sequence ID" value="FBpp0072591"/>
    <property type="gene ID" value="FBgn0028577"/>
</dbReference>
<dbReference type="EnsemblMetazoa" id="FBtr0072708">
    <molecule id="Q8T6B9-2"/>
    <property type="protein sequence ID" value="FBpp0072592"/>
    <property type="gene ID" value="FBgn0028577"/>
</dbReference>
<dbReference type="EnsemblMetazoa" id="FBtr0072709">
    <molecule id="Q8T6B9-1"/>
    <property type="protein sequence ID" value="FBpp0072593"/>
    <property type="gene ID" value="FBgn0028577"/>
</dbReference>
<dbReference type="EnsemblMetazoa" id="FBtr0072710">
    <molecule id="Q8T6B9-2"/>
    <property type="protein sequence ID" value="FBpp0072594"/>
    <property type="gene ID" value="FBgn0028577"/>
</dbReference>
<dbReference type="EnsemblMetazoa" id="FBtr0300416">
    <molecule id="Q8T6B9-2"/>
    <property type="protein sequence ID" value="FBpp0289645"/>
    <property type="gene ID" value="FBgn0028577"/>
</dbReference>
<dbReference type="EnsemblMetazoa" id="FBtr0300417">
    <molecule id="Q8T6B9-2"/>
    <property type="protein sequence ID" value="FBpp0289646"/>
    <property type="gene ID" value="FBgn0028577"/>
</dbReference>
<dbReference type="EnsemblMetazoa" id="FBtr0300418">
    <molecule id="Q8T6B9-2"/>
    <property type="protein sequence ID" value="FBpp0289647"/>
    <property type="gene ID" value="FBgn0028577"/>
</dbReference>
<dbReference type="EnsemblMetazoa" id="FBtr0300419">
    <molecule id="Q8T6B9-2"/>
    <property type="protein sequence ID" value="FBpp0289648"/>
    <property type="gene ID" value="FBgn0028577"/>
</dbReference>
<dbReference type="EnsemblMetazoa" id="FBtr0300420">
    <molecule id="Q8T6B9-2"/>
    <property type="protein sequence ID" value="FBpp0289649"/>
    <property type="gene ID" value="FBgn0028577"/>
</dbReference>
<dbReference type="EnsemblMetazoa" id="FBtr0301523">
    <molecule id="Q8T6B9-2"/>
    <property type="protein sequence ID" value="FBpp0290738"/>
    <property type="gene ID" value="FBgn0028577"/>
</dbReference>
<dbReference type="GeneID" id="38173"/>
<dbReference type="KEGG" id="dme:Dmel_CG12085"/>
<dbReference type="AGR" id="FB:FBgn0028577"/>
<dbReference type="CTD" id="38173"/>
<dbReference type="FlyBase" id="FBgn0028577">
    <property type="gene designation" value="hfp"/>
</dbReference>
<dbReference type="VEuPathDB" id="VectorBase:FBgn0028577"/>
<dbReference type="eggNOG" id="KOG0124">
    <property type="taxonomic scope" value="Eukaryota"/>
</dbReference>
<dbReference type="GeneTree" id="ENSGT00940000155594"/>
<dbReference type="InParanoid" id="Q8T6B9"/>
<dbReference type="OMA" id="VHTHKGY"/>
<dbReference type="OrthoDB" id="20943at2759"/>
<dbReference type="PhylomeDB" id="Q8T6B9"/>
<dbReference type="Reactome" id="R-DME-72163">
    <property type="pathway name" value="mRNA Splicing - Major Pathway"/>
</dbReference>
<dbReference type="BioGRID-ORCS" id="38173">
    <property type="hits" value="0 hits in 1 CRISPR screen"/>
</dbReference>
<dbReference type="ChiTaRS" id="pUf68">
    <property type="organism name" value="fly"/>
</dbReference>
<dbReference type="GenomeRNAi" id="38173"/>
<dbReference type="PRO" id="PR:Q8T6B9"/>
<dbReference type="Proteomes" id="UP000000803">
    <property type="component" value="Chromosome 3L"/>
</dbReference>
<dbReference type="Bgee" id="FBgn0028577">
    <property type="expression patterns" value="Expressed in antennal olfactory receptor neuron of basiconic sensillum in antenna and 291 other cell types or tissues"/>
</dbReference>
<dbReference type="ExpressionAtlas" id="Q8T6B9">
    <property type="expression patterns" value="baseline and differential"/>
</dbReference>
<dbReference type="GO" id="GO:0071013">
    <property type="term" value="C:catalytic step 2 spliceosome"/>
    <property type="evidence" value="ECO:0007005"/>
    <property type="project" value="FlyBase"/>
</dbReference>
<dbReference type="GO" id="GO:0005634">
    <property type="term" value="C:nucleus"/>
    <property type="evidence" value="ECO:0000314"/>
    <property type="project" value="FlyBase"/>
</dbReference>
<dbReference type="GO" id="GO:0071011">
    <property type="term" value="C:precatalytic spliceosome"/>
    <property type="evidence" value="ECO:0007005"/>
    <property type="project" value="FlyBase"/>
</dbReference>
<dbReference type="GO" id="GO:0032991">
    <property type="term" value="C:protein-containing complex"/>
    <property type="evidence" value="ECO:0000353"/>
    <property type="project" value="FlyBase"/>
</dbReference>
<dbReference type="GO" id="GO:0003723">
    <property type="term" value="F:RNA binding"/>
    <property type="evidence" value="ECO:0007669"/>
    <property type="project" value="UniProtKB-KW"/>
</dbReference>
<dbReference type="GO" id="GO:0000380">
    <property type="term" value="P:alternative mRNA splicing, via spliceosome"/>
    <property type="evidence" value="ECO:0000315"/>
    <property type="project" value="FlyBase"/>
</dbReference>
<dbReference type="GO" id="GO:0007282">
    <property type="term" value="P:cystoblast division"/>
    <property type="evidence" value="ECO:0000315"/>
    <property type="project" value="FlyBase"/>
</dbReference>
<dbReference type="GO" id="GO:0006376">
    <property type="term" value="P:mRNA splice site recognition"/>
    <property type="evidence" value="ECO:0000315"/>
    <property type="project" value="FlyBase"/>
</dbReference>
<dbReference type="GO" id="GO:0000398">
    <property type="term" value="P:mRNA splicing, via spliceosome"/>
    <property type="evidence" value="ECO:0000315"/>
    <property type="project" value="FlyBase"/>
</dbReference>
<dbReference type="GO" id="GO:0008285">
    <property type="term" value="P:negative regulation of cell population proliferation"/>
    <property type="evidence" value="ECO:0000315"/>
    <property type="project" value="FlyBase"/>
</dbReference>
<dbReference type="GO" id="GO:0045926">
    <property type="term" value="P:negative regulation of growth"/>
    <property type="evidence" value="ECO:0000315"/>
    <property type="project" value="FlyBase"/>
</dbReference>
<dbReference type="GO" id="GO:0048477">
    <property type="term" value="P:oogenesis"/>
    <property type="evidence" value="ECO:0007669"/>
    <property type="project" value="UniProtKB-KW"/>
</dbReference>
<dbReference type="GO" id="GO:0000381">
    <property type="term" value="P:regulation of alternative mRNA splicing, via spliceosome"/>
    <property type="evidence" value="ECO:0000315"/>
    <property type="project" value="FlyBase"/>
</dbReference>
<dbReference type="GO" id="GO:0001558">
    <property type="term" value="P:regulation of cell growth"/>
    <property type="evidence" value="ECO:0000315"/>
    <property type="project" value="FlyBase"/>
</dbReference>
<dbReference type="CDD" id="cd12370">
    <property type="entry name" value="RRM1_PUF60"/>
    <property type="match status" value="1"/>
</dbReference>
<dbReference type="CDD" id="cd12371">
    <property type="entry name" value="RRM2_PUF60"/>
    <property type="match status" value="1"/>
</dbReference>
<dbReference type="CDD" id="cd12648">
    <property type="entry name" value="RRM3_UHM_PUF60"/>
    <property type="match status" value="1"/>
</dbReference>
<dbReference type="FunFam" id="3.30.70.330:FF:000382">
    <property type="entry name" value="G-patch domain-containing protein"/>
    <property type="match status" value="1"/>
</dbReference>
<dbReference type="FunFam" id="3.30.70.330:FF:000136">
    <property type="entry name" value="poly(U)-binding-splicing factor PUF60 isoform X1"/>
    <property type="match status" value="1"/>
</dbReference>
<dbReference type="FunFam" id="3.30.70.330:FF:000152">
    <property type="entry name" value="poly(U)-binding-splicing factor PUF60 isoform X1"/>
    <property type="match status" value="1"/>
</dbReference>
<dbReference type="Gene3D" id="3.30.70.330">
    <property type="match status" value="3"/>
</dbReference>
<dbReference type="InterPro" id="IPR012677">
    <property type="entry name" value="Nucleotide-bd_a/b_plait_sf"/>
</dbReference>
<dbReference type="InterPro" id="IPR006532">
    <property type="entry name" value="PUF60-like"/>
</dbReference>
<dbReference type="InterPro" id="IPR051974">
    <property type="entry name" value="PUF60_regulator"/>
</dbReference>
<dbReference type="InterPro" id="IPR034209">
    <property type="entry name" value="PUF60_RRM1"/>
</dbReference>
<dbReference type="InterPro" id="IPR034211">
    <property type="entry name" value="PUF60_RRM2"/>
</dbReference>
<dbReference type="InterPro" id="IPR034212">
    <property type="entry name" value="PUF60_RRM3"/>
</dbReference>
<dbReference type="InterPro" id="IPR035979">
    <property type="entry name" value="RBD_domain_sf"/>
</dbReference>
<dbReference type="InterPro" id="IPR000504">
    <property type="entry name" value="RRM_dom"/>
</dbReference>
<dbReference type="InterPro" id="IPR003954">
    <property type="entry name" value="RRM_dom_euk"/>
</dbReference>
<dbReference type="NCBIfam" id="TIGR01645">
    <property type="entry name" value="half-pint"/>
    <property type="match status" value="1"/>
</dbReference>
<dbReference type="PANTHER" id="PTHR47330:SF1">
    <property type="entry name" value="POLY(U)-BINDING-SPLICING FACTOR PUF60"/>
    <property type="match status" value="1"/>
</dbReference>
<dbReference type="PANTHER" id="PTHR47330">
    <property type="entry name" value="POLY(U)-BINDING-SPLICING FACTOR PUF60-B-RELATED"/>
    <property type="match status" value="1"/>
</dbReference>
<dbReference type="Pfam" id="PF00076">
    <property type="entry name" value="RRM_1"/>
    <property type="match status" value="2"/>
</dbReference>
<dbReference type="SMART" id="SM00360">
    <property type="entry name" value="RRM"/>
    <property type="match status" value="3"/>
</dbReference>
<dbReference type="SMART" id="SM00361">
    <property type="entry name" value="RRM_1"/>
    <property type="match status" value="2"/>
</dbReference>
<dbReference type="SUPFAM" id="SSF54928">
    <property type="entry name" value="RNA-binding domain, RBD"/>
    <property type="match status" value="2"/>
</dbReference>
<dbReference type="PROSITE" id="PS50102">
    <property type="entry name" value="RRM"/>
    <property type="match status" value="3"/>
</dbReference>
<comment type="function">
    <text evidence="4 6">Splicing factor that regulates oogenesis and controls both mitosis and mRNA localization in the germline by regulating mRNA splicing of a subset of genes within the ovary (PubMed:11879639). Probably acts by regulating the alternative splice site selection of the otu transcript (PubMed:11879639). Also regulates the alternative splicing of eIF4E1 and grk, while it is not involved in the splicing of par-1, sqd or psq (PubMed:11879639). Involved in the alternative splicing of the bicistronic pre-mRNA encoding Kdm3 and CG8176; required for the efficient production of mRNA encoding Kdm3 and Kdm3-mediated regulation of rhino-dependent piRNA production (PubMed:37027460).</text>
</comment>
<comment type="subunit">
    <text evidence="4">Interacts with enc. However, given the cytoplasmic localization of enc, the relevance of such interaction is unclear.</text>
</comment>
<comment type="subcellular location">
    <subcellularLocation>
        <location evidence="4">Nucleus</location>
    </subcellularLocation>
</comment>
<comment type="alternative products">
    <event type="alternative splicing"/>
    <isoform>
        <id>Q8T6B9-1</id>
        <name>A</name>
        <name>Long</name>
        <sequence type="displayed"/>
    </isoform>
    <isoform>
        <id>Q8T6B9-2</id>
        <name>B</name>
        <name>C</name>
        <sequence type="described" ref="VSP_009328"/>
    </isoform>
</comment>
<comment type="tissue specificity">
    <text evidence="4">Expressed in all germline cells and within the follicle cell.</text>
</comment>
<comment type="domain">
    <text evidence="3">The third RNA recognition motif, called PUMP domain in PubMed:10606266, is atypical and may rather mediate protein-protein interactions.</text>
</comment>
<comment type="disruption phenotype">
    <text evidence="4 6">Pupal lethal; larvae are slow to develop and die shortly after pupariation, displaying melanized patches of tissue (PubMed:11879639). RNAi-mediated knockdown in germ cells does not affect fertility (PubMed:37027460).</text>
</comment>
<comment type="similarity">
    <text evidence="10">Belongs to the RRM half pint family.</text>
</comment>
<feature type="chain" id="PRO_0000081744" description="Poly(U)-binding-splicing factor hfp">
    <location>
        <begin position="1"/>
        <end position="637"/>
    </location>
</feature>
<feature type="domain" description="RRM 1" evidence="1">
    <location>
        <begin position="130"/>
        <end position="208"/>
    </location>
</feature>
<feature type="domain" description="RRM 2" evidence="1">
    <location>
        <begin position="227"/>
        <end position="305"/>
    </location>
</feature>
<feature type="domain" description="RRM 3; atypical" evidence="1">
    <location>
        <begin position="537"/>
        <end position="627"/>
    </location>
</feature>
<feature type="region of interest" description="Disordered" evidence="2">
    <location>
        <begin position="1"/>
        <end position="41"/>
    </location>
</feature>
<feature type="compositionally biased region" description="Basic and acidic residues" evidence="2">
    <location>
        <begin position="1"/>
        <end position="20"/>
    </location>
</feature>
<feature type="compositionally biased region" description="Basic and acidic residues" evidence="2">
    <location>
        <begin position="28"/>
        <end position="37"/>
    </location>
</feature>
<feature type="modified residue" description="Phosphoserine" evidence="5">
    <location>
        <position position="13"/>
    </location>
</feature>
<feature type="modified residue" description="Phosphoserine" evidence="5">
    <location>
        <position position="30"/>
    </location>
</feature>
<feature type="splice variant" id="VSP_009328" description="In isoform B." evidence="9">
    <location>
        <begin position="1"/>
        <end position="92"/>
    </location>
</feature>
<feature type="sequence conflict" description="In Ref. 2; AAL86452." evidence="10" ref="2">
    <original>D</original>
    <variation>A</variation>
    <location>
        <position position="583"/>
    </location>
</feature>
<keyword id="KW-0025">Alternative splicing</keyword>
<keyword id="KW-0217">Developmental protein</keyword>
<keyword id="KW-0221">Differentiation</keyword>
<keyword id="KW-0507">mRNA processing</keyword>
<keyword id="KW-0508">mRNA splicing</keyword>
<keyword id="KW-0539">Nucleus</keyword>
<keyword id="KW-0896">Oogenesis</keyword>
<keyword id="KW-0597">Phosphoprotein</keyword>
<keyword id="KW-1185">Reference proteome</keyword>
<keyword id="KW-0677">Repeat</keyword>
<keyword id="KW-0694">RNA-binding</keyword>
<name>PUF68_DROME</name>
<protein>
    <recommendedName>
        <fullName evidence="8">Poly(U)-binding-splicing factor hfp</fullName>
    </recommendedName>
    <alternativeName>
        <fullName evidence="10">68 kDa poly(U)-binding-splicing factor</fullName>
    </alternativeName>
    <alternativeName>
        <fullName evidence="7">PUF60 homolog</fullName>
    </alternativeName>
    <alternativeName>
        <fullName evidence="8 11">Protein half pint</fullName>
    </alternativeName>
</protein>
<sequence>MGSNDRASRSPRSDDQREISDMPATKRTRSDSGKSTDSKIPYLSQPLYDLKQTGDVKFGPGTRSALLGLLGGALPKLSSEQHDLVSKAKKYAMEQSIKMVLMKQTLAHQQQQLATQRTQVQRQQALALMCRVYVGSISFELKEDTIRVAFTPFGPIKSINMSWDPITQKHKGFAFVEYEIPEGAQLALEQMNGALMGGRNIKVGRPSNMPQAQQVIDEVQEEAKSFNRIYVASIHPDLSEEDIKSVFEAFGPILYCKLAQGTSLHTHKGYGFIEYANKQAMDEAIASMNLFDLGGQLLRVGRSITPPNALACPTTNSTMPTAAAVAAAAATAKIQALDAVASNAVLGLSQNTPVMAAGAVVTKVGAMPVVSAATSAAALHPALAQAAPALLPPGIFQAPTPVAPSLLGVPAGLQPLQAVVPTLPPPALLATPTLPMTVGGVGVGLVPTVATLAGAEASKGAAAAAALSAAANNAAVTAANLSENIKKAHEKQQEELQKKLMDEGDVQTLQQQENMSIKGQSARQLVMQRLMRPVDSRVIILRNMVGPEDVDETLQEEIQEECSKFGTVSRVIIFNEKQTENEDDDEAEIIVKIFVEFSAGAEAMRGKEALDGRFFGGRRVVAELYDQGIFDQGDLSG</sequence>
<reference key="1">
    <citation type="journal article" date="1999" name="RNA">
        <title>PUF60: a novel U2AF65-related splicing activity.</title>
        <authorList>
            <person name="Page-McCaw P.S."/>
            <person name="Amonlirdviman K."/>
            <person name="Sharp P.A."/>
        </authorList>
    </citation>
    <scope>NUCLEOTIDE SEQUENCE [MRNA] (ISOFORM A)</scope>
    <scope>DOMAIN</scope>
</reference>
<reference key="2">
    <citation type="journal article" date="2002" name="Dev. Cell">
        <title>Half pint regulates alternative splice site selection in Drosophila.</title>
        <authorList>
            <person name="Van Buskirk C."/>
            <person name="Schuepbach T."/>
        </authorList>
    </citation>
    <scope>NUCLEOTIDE SEQUENCE [MRNA] (ISOFORM A)</scope>
    <scope>FUNCTION</scope>
    <scope>INTERACTION WITH ENC</scope>
    <scope>SUBCELLULAR LOCATION</scope>
    <scope>TISSUE SPECIFICITY</scope>
    <scope>DISRUPTION PHENOTYPE</scope>
</reference>
<reference key="3">
    <citation type="journal article" date="2000" name="Science">
        <title>The genome sequence of Drosophila melanogaster.</title>
        <authorList>
            <person name="Adams M.D."/>
            <person name="Celniker S.E."/>
            <person name="Holt R.A."/>
            <person name="Evans C.A."/>
            <person name="Gocayne J.D."/>
            <person name="Amanatides P.G."/>
            <person name="Scherer S.E."/>
            <person name="Li P.W."/>
            <person name="Hoskins R.A."/>
            <person name="Galle R.F."/>
            <person name="George R.A."/>
            <person name="Lewis S.E."/>
            <person name="Richards S."/>
            <person name="Ashburner M."/>
            <person name="Henderson S.N."/>
            <person name="Sutton G.G."/>
            <person name="Wortman J.R."/>
            <person name="Yandell M.D."/>
            <person name="Zhang Q."/>
            <person name="Chen L.X."/>
            <person name="Brandon R.C."/>
            <person name="Rogers Y.-H.C."/>
            <person name="Blazej R.G."/>
            <person name="Champe M."/>
            <person name="Pfeiffer B.D."/>
            <person name="Wan K.H."/>
            <person name="Doyle C."/>
            <person name="Baxter E.G."/>
            <person name="Helt G."/>
            <person name="Nelson C.R."/>
            <person name="Miklos G.L.G."/>
            <person name="Abril J.F."/>
            <person name="Agbayani A."/>
            <person name="An H.-J."/>
            <person name="Andrews-Pfannkoch C."/>
            <person name="Baldwin D."/>
            <person name="Ballew R.M."/>
            <person name="Basu A."/>
            <person name="Baxendale J."/>
            <person name="Bayraktaroglu L."/>
            <person name="Beasley E.M."/>
            <person name="Beeson K.Y."/>
            <person name="Benos P.V."/>
            <person name="Berman B.P."/>
            <person name="Bhandari D."/>
            <person name="Bolshakov S."/>
            <person name="Borkova D."/>
            <person name="Botchan M.R."/>
            <person name="Bouck J."/>
            <person name="Brokstein P."/>
            <person name="Brottier P."/>
            <person name="Burtis K.C."/>
            <person name="Busam D.A."/>
            <person name="Butler H."/>
            <person name="Cadieu E."/>
            <person name="Center A."/>
            <person name="Chandra I."/>
            <person name="Cherry J.M."/>
            <person name="Cawley S."/>
            <person name="Dahlke C."/>
            <person name="Davenport L.B."/>
            <person name="Davies P."/>
            <person name="de Pablos B."/>
            <person name="Delcher A."/>
            <person name="Deng Z."/>
            <person name="Mays A.D."/>
            <person name="Dew I."/>
            <person name="Dietz S.M."/>
            <person name="Dodson K."/>
            <person name="Doup L.E."/>
            <person name="Downes M."/>
            <person name="Dugan-Rocha S."/>
            <person name="Dunkov B.C."/>
            <person name="Dunn P."/>
            <person name="Durbin K.J."/>
            <person name="Evangelista C.C."/>
            <person name="Ferraz C."/>
            <person name="Ferriera S."/>
            <person name="Fleischmann W."/>
            <person name="Fosler C."/>
            <person name="Gabrielian A.E."/>
            <person name="Garg N.S."/>
            <person name="Gelbart W.M."/>
            <person name="Glasser K."/>
            <person name="Glodek A."/>
            <person name="Gong F."/>
            <person name="Gorrell J.H."/>
            <person name="Gu Z."/>
            <person name="Guan P."/>
            <person name="Harris M."/>
            <person name="Harris N.L."/>
            <person name="Harvey D.A."/>
            <person name="Heiman T.J."/>
            <person name="Hernandez J.R."/>
            <person name="Houck J."/>
            <person name="Hostin D."/>
            <person name="Houston K.A."/>
            <person name="Howland T.J."/>
            <person name="Wei M.-H."/>
            <person name="Ibegwam C."/>
            <person name="Jalali M."/>
            <person name="Kalush F."/>
            <person name="Karpen G.H."/>
            <person name="Ke Z."/>
            <person name="Kennison J.A."/>
            <person name="Ketchum K.A."/>
            <person name="Kimmel B.E."/>
            <person name="Kodira C.D."/>
            <person name="Kraft C.L."/>
            <person name="Kravitz S."/>
            <person name="Kulp D."/>
            <person name="Lai Z."/>
            <person name="Lasko P."/>
            <person name="Lei Y."/>
            <person name="Levitsky A.A."/>
            <person name="Li J.H."/>
            <person name="Li Z."/>
            <person name="Liang Y."/>
            <person name="Lin X."/>
            <person name="Liu X."/>
            <person name="Mattei B."/>
            <person name="McIntosh T.C."/>
            <person name="McLeod M.P."/>
            <person name="McPherson D."/>
            <person name="Merkulov G."/>
            <person name="Milshina N.V."/>
            <person name="Mobarry C."/>
            <person name="Morris J."/>
            <person name="Moshrefi A."/>
            <person name="Mount S.M."/>
            <person name="Moy M."/>
            <person name="Murphy B."/>
            <person name="Murphy L."/>
            <person name="Muzny D.M."/>
            <person name="Nelson D.L."/>
            <person name="Nelson D.R."/>
            <person name="Nelson K.A."/>
            <person name="Nixon K."/>
            <person name="Nusskern D.R."/>
            <person name="Pacleb J.M."/>
            <person name="Palazzolo M."/>
            <person name="Pittman G.S."/>
            <person name="Pan S."/>
            <person name="Pollard J."/>
            <person name="Puri V."/>
            <person name="Reese M.G."/>
            <person name="Reinert K."/>
            <person name="Remington K."/>
            <person name="Saunders R.D.C."/>
            <person name="Scheeler F."/>
            <person name="Shen H."/>
            <person name="Shue B.C."/>
            <person name="Siden-Kiamos I."/>
            <person name="Simpson M."/>
            <person name="Skupski M.P."/>
            <person name="Smith T.J."/>
            <person name="Spier E."/>
            <person name="Spradling A.C."/>
            <person name="Stapleton M."/>
            <person name="Strong R."/>
            <person name="Sun E."/>
            <person name="Svirskas R."/>
            <person name="Tector C."/>
            <person name="Turner R."/>
            <person name="Venter E."/>
            <person name="Wang A.H."/>
            <person name="Wang X."/>
            <person name="Wang Z.-Y."/>
            <person name="Wassarman D.A."/>
            <person name="Weinstock G.M."/>
            <person name="Weissenbach J."/>
            <person name="Williams S.M."/>
            <person name="Woodage T."/>
            <person name="Worley K.C."/>
            <person name="Wu D."/>
            <person name="Yang S."/>
            <person name="Yao Q.A."/>
            <person name="Ye J."/>
            <person name="Yeh R.-F."/>
            <person name="Zaveri J.S."/>
            <person name="Zhan M."/>
            <person name="Zhang G."/>
            <person name="Zhao Q."/>
            <person name="Zheng L."/>
            <person name="Zheng X.H."/>
            <person name="Zhong F.N."/>
            <person name="Zhong W."/>
            <person name="Zhou X."/>
            <person name="Zhu S.C."/>
            <person name="Zhu X."/>
            <person name="Smith H.O."/>
            <person name="Gibbs R.A."/>
            <person name="Myers E.W."/>
            <person name="Rubin G.M."/>
            <person name="Venter J.C."/>
        </authorList>
    </citation>
    <scope>NUCLEOTIDE SEQUENCE [LARGE SCALE GENOMIC DNA]</scope>
    <source>
        <strain>Berkeley</strain>
    </source>
</reference>
<reference key="4">
    <citation type="journal article" date="2002" name="Genome Biol.">
        <title>Annotation of the Drosophila melanogaster euchromatic genome: a systematic review.</title>
        <authorList>
            <person name="Misra S."/>
            <person name="Crosby M.A."/>
            <person name="Mungall C.J."/>
            <person name="Matthews B.B."/>
            <person name="Campbell K.S."/>
            <person name="Hradecky P."/>
            <person name="Huang Y."/>
            <person name="Kaminker J.S."/>
            <person name="Millburn G.H."/>
            <person name="Prochnik S.E."/>
            <person name="Smith C.D."/>
            <person name="Tupy J.L."/>
            <person name="Whitfield E.J."/>
            <person name="Bayraktaroglu L."/>
            <person name="Berman B.P."/>
            <person name="Bettencourt B.R."/>
            <person name="Celniker S.E."/>
            <person name="de Grey A.D.N.J."/>
            <person name="Drysdale R.A."/>
            <person name="Harris N.L."/>
            <person name="Richter J."/>
            <person name="Russo S."/>
            <person name="Schroeder A.J."/>
            <person name="Shu S.Q."/>
            <person name="Stapleton M."/>
            <person name="Yamada C."/>
            <person name="Ashburner M."/>
            <person name="Gelbart W.M."/>
            <person name="Rubin G.M."/>
            <person name="Lewis S.E."/>
        </authorList>
    </citation>
    <scope>GENOME REANNOTATION</scope>
    <scope>ALTERNATIVE SPLICING</scope>
    <source>
        <strain>Berkeley</strain>
    </source>
</reference>
<reference key="5">
    <citation type="journal article" date="2002" name="Genome Biol.">
        <title>A Drosophila full-length cDNA resource.</title>
        <authorList>
            <person name="Stapleton M."/>
            <person name="Carlson J.W."/>
            <person name="Brokstein P."/>
            <person name="Yu C."/>
            <person name="Champe M."/>
            <person name="George R.A."/>
            <person name="Guarin H."/>
            <person name="Kronmiller B."/>
            <person name="Pacleb J.M."/>
            <person name="Park S."/>
            <person name="Wan K.H."/>
            <person name="Rubin G.M."/>
            <person name="Celniker S.E."/>
        </authorList>
    </citation>
    <scope>NUCLEOTIDE SEQUENCE [LARGE SCALE MRNA] (ISOFORM B)</scope>
    <source>
        <strain>Berkeley</strain>
        <tissue>Head</tissue>
    </source>
</reference>
<reference key="6">
    <citation type="journal article" date="2008" name="J. Proteome Res.">
        <title>Phosphoproteome analysis of Drosophila melanogaster embryos.</title>
        <authorList>
            <person name="Zhai B."/>
            <person name="Villen J."/>
            <person name="Beausoleil S.A."/>
            <person name="Mintseris J."/>
            <person name="Gygi S.P."/>
        </authorList>
    </citation>
    <scope>PHOSPHORYLATION [LARGE SCALE ANALYSIS] AT SER-13 AND SER-30</scope>
    <scope>IDENTIFICATION BY MASS SPECTROMETRY</scope>
    <source>
        <tissue>Embryo</tissue>
    </source>
</reference>
<reference key="7">
    <citation type="journal article" date="2023" name="Sci. Adv.">
        <title>The histone demethylase Kdm3 prevents auto-immune piRNAs production in Drosophila.</title>
        <authorList>
            <person name="Casier K."/>
            <person name="Autaa J."/>
            <person name="Gueguen N."/>
            <person name="Delmarre V."/>
            <person name="Marie P.P."/>
            <person name="Ronsseray S."/>
            <person name="Carre C."/>
            <person name="Brasset E."/>
            <person name="Teysset L."/>
            <person name="Boivin A."/>
        </authorList>
    </citation>
    <scope>FUNCTION</scope>
    <scope>DISRUPTION PHENOTYPE</scope>
</reference>
<evidence type="ECO:0000255" key="1">
    <source>
        <dbReference type="PROSITE-ProRule" id="PRU00176"/>
    </source>
</evidence>
<evidence type="ECO:0000256" key="2">
    <source>
        <dbReference type="SAM" id="MobiDB-lite"/>
    </source>
</evidence>
<evidence type="ECO:0000269" key="3">
    <source>
    </source>
</evidence>
<evidence type="ECO:0000269" key="4">
    <source>
    </source>
</evidence>
<evidence type="ECO:0000269" key="5">
    <source>
    </source>
</evidence>
<evidence type="ECO:0000269" key="6">
    <source>
    </source>
</evidence>
<evidence type="ECO:0000303" key="7">
    <source>
    </source>
</evidence>
<evidence type="ECO:0000303" key="8">
    <source>
    </source>
</evidence>
<evidence type="ECO:0000303" key="9">
    <source>
    </source>
</evidence>
<evidence type="ECO:0000305" key="10"/>
<evidence type="ECO:0000312" key="11">
    <source>
        <dbReference type="FlyBase" id="FBgn0028577"/>
    </source>
</evidence>
<evidence type="ECO:0000312" key="12">
    <source>
        <dbReference type="Proteomes" id="UP000000803"/>
    </source>
</evidence>